<sequence length="396" mass="43079">MAKAKFERTKPHVNIGTIGHVDHGKTTLTAAITKVLAGKGQAEFKAFDQIDNAPEERERGITIATAHVEYETDKRHYAHVDCPGHADYVKNMITGAAQMDGAILVVSAADGPMPQTREHILLARQVGVPYIVVYLNKADMVDDEELLELVELEIRELLSSYDFPGDDIPIVKGSALKALEGEKSELGEDSIIKLMDAVDSYIPDPERAVDKPFLMPVEDVFSISGRGTVATGRVERGIVKVGEEVEIVGIKATAKTTVTGVEMFRKLLDEGRAGDNIGALLRGIKREEIERGQVLAKPGSITPHTKFKAEAYILNKEEGGRHTPFFNGYRPQFYFRTTDVTGIVDLPAGTEMVMPGDNVAVTVNLITPIAMDEGLRFAIREGGRTVGAGVVSSIIE</sequence>
<accession>A1ALS6</accession>
<proteinExistence type="inferred from homology"/>
<feature type="chain" id="PRO_0000337457" description="Elongation factor Tu">
    <location>
        <begin position="1"/>
        <end position="396"/>
    </location>
</feature>
<feature type="domain" description="tr-type G">
    <location>
        <begin position="10"/>
        <end position="206"/>
    </location>
</feature>
<feature type="region of interest" description="G1" evidence="1">
    <location>
        <begin position="19"/>
        <end position="26"/>
    </location>
</feature>
<feature type="region of interest" description="G2" evidence="1">
    <location>
        <begin position="60"/>
        <end position="64"/>
    </location>
</feature>
<feature type="region of interest" description="G3" evidence="1">
    <location>
        <begin position="81"/>
        <end position="84"/>
    </location>
</feature>
<feature type="region of interest" description="G4" evidence="1">
    <location>
        <begin position="136"/>
        <end position="139"/>
    </location>
</feature>
<feature type="region of interest" description="G5" evidence="1">
    <location>
        <begin position="174"/>
        <end position="176"/>
    </location>
</feature>
<feature type="binding site" evidence="2">
    <location>
        <begin position="19"/>
        <end position="26"/>
    </location>
    <ligand>
        <name>GTP</name>
        <dbReference type="ChEBI" id="CHEBI:37565"/>
    </ligand>
</feature>
<feature type="binding site" evidence="2">
    <location>
        <position position="26"/>
    </location>
    <ligand>
        <name>Mg(2+)</name>
        <dbReference type="ChEBI" id="CHEBI:18420"/>
    </ligand>
</feature>
<feature type="binding site" evidence="2">
    <location>
        <begin position="81"/>
        <end position="85"/>
    </location>
    <ligand>
        <name>GTP</name>
        <dbReference type="ChEBI" id="CHEBI:37565"/>
    </ligand>
</feature>
<feature type="binding site" evidence="2">
    <location>
        <begin position="136"/>
        <end position="139"/>
    </location>
    <ligand>
        <name>GTP</name>
        <dbReference type="ChEBI" id="CHEBI:37565"/>
    </ligand>
</feature>
<keyword id="KW-0963">Cytoplasm</keyword>
<keyword id="KW-0251">Elongation factor</keyword>
<keyword id="KW-0342">GTP-binding</keyword>
<keyword id="KW-0378">Hydrolase</keyword>
<keyword id="KW-0460">Magnesium</keyword>
<keyword id="KW-0479">Metal-binding</keyword>
<keyword id="KW-0547">Nucleotide-binding</keyword>
<keyword id="KW-0648">Protein biosynthesis</keyword>
<keyword id="KW-1185">Reference proteome</keyword>
<name>EFTU_PELPD</name>
<gene>
    <name evidence="2" type="primary">tuf1</name>
    <name type="ordered locus">Ppro_0665</name>
</gene>
<gene>
    <name evidence="2" type="primary">tuf2</name>
    <name type="ordered locus">Ppro_0678</name>
</gene>
<comment type="function">
    <text evidence="2">GTP hydrolase that promotes the GTP-dependent binding of aminoacyl-tRNA to the A-site of ribosomes during protein biosynthesis.</text>
</comment>
<comment type="catalytic activity">
    <reaction evidence="2">
        <text>GTP + H2O = GDP + phosphate + H(+)</text>
        <dbReference type="Rhea" id="RHEA:19669"/>
        <dbReference type="ChEBI" id="CHEBI:15377"/>
        <dbReference type="ChEBI" id="CHEBI:15378"/>
        <dbReference type="ChEBI" id="CHEBI:37565"/>
        <dbReference type="ChEBI" id="CHEBI:43474"/>
        <dbReference type="ChEBI" id="CHEBI:58189"/>
        <dbReference type="EC" id="3.6.5.3"/>
    </reaction>
    <physiologicalReaction direction="left-to-right" evidence="2">
        <dbReference type="Rhea" id="RHEA:19670"/>
    </physiologicalReaction>
</comment>
<comment type="subunit">
    <text evidence="2">Monomer.</text>
</comment>
<comment type="subcellular location">
    <subcellularLocation>
        <location evidence="2">Cytoplasm</location>
    </subcellularLocation>
</comment>
<comment type="similarity">
    <text evidence="2">Belongs to the TRAFAC class translation factor GTPase superfamily. Classic translation factor GTPase family. EF-Tu/EF-1A subfamily.</text>
</comment>
<protein>
    <recommendedName>
        <fullName evidence="2">Elongation factor Tu</fullName>
        <shortName evidence="2">EF-Tu</shortName>
        <ecNumber evidence="2">3.6.5.3</ecNumber>
    </recommendedName>
</protein>
<evidence type="ECO:0000250" key="1"/>
<evidence type="ECO:0000255" key="2">
    <source>
        <dbReference type="HAMAP-Rule" id="MF_00118"/>
    </source>
</evidence>
<dbReference type="EC" id="3.6.5.3" evidence="2"/>
<dbReference type="EMBL" id="CP000482">
    <property type="protein sequence ID" value="ABK98296.1"/>
    <property type="molecule type" value="Genomic_DNA"/>
</dbReference>
<dbReference type="EMBL" id="CP000482">
    <property type="protein sequence ID" value="ABK98309.1"/>
    <property type="molecule type" value="Genomic_DNA"/>
</dbReference>
<dbReference type="RefSeq" id="WP_011734609.1">
    <property type="nucleotide sequence ID" value="NC_008609.1"/>
</dbReference>
<dbReference type="SMR" id="A1ALS6"/>
<dbReference type="STRING" id="338966.Ppro_0665"/>
<dbReference type="KEGG" id="ppd:Ppro_0665"/>
<dbReference type="KEGG" id="ppd:Ppro_0678"/>
<dbReference type="eggNOG" id="COG0050">
    <property type="taxonomic scope" value="Bacteria"/>
</dbReference>
<dbReference type="HOGENOM" id="CLU_007265_0_0_7"/>
<dbReference type="OrthoDB" id="9803139at2"/>
<dbReference type="Proteomes" id="UP000006732">
    <property type="component" value="Chromosome"/>
</dbReference>
<dbReference type="GO" id="GO:0005829">
    <property type="term" value="C:cytosol"/>
    <property type="evidence" value="ECO:0007669"/>
    <property type="project" value="TreeGrafter"/>
</dbReference>
<dbReference type="GO" id="GO:0005525">
    <property type="term" value="F:GTP binding"/>
    <property type="evidence" value="ECO:0007669"/>
    <property type="project" value="UniProtKB-UniRule"/>
</dbReference>
<dbReference type="GO" id="GO:0003924">
    <property type="term" value="F:GTPase activity"/>
    <property type="evidence" value="ECO:0007669"/>
    <property type="project" value="InterPro"/>
</dbReference>
<dbReference type="GO" id="GO:0003746">
    <property type="term" value="F:translation elongation factor activity"/>
    <property type="evidence" value="ECO:0007669"/>
    <property type="project" value="UniProtKB-UniRule"/>
</dbReference>
<dbReference type="CDD" id="cd01884">
    <property type="entry name" value="EF_Tu"/>
    <property type="match status" value="1"/>
</dbReference>
<dbReference type="CDD" id="cd03697">
    <property type="entry name" value="EFTU_II"/>
    <property type="match status" value="1"/>
</dbReference>
<dbReference type="CDD" id="cd03707">
    <property type="entry name" value="EFTU_III"/>
    <property type="match status" value="1"/>
</dbReference>
<dbReference type="FunFam" id="2.40.30.10:FF:000001">
    <property type="entry name" value="Elongation factor Tu"/>
    <property type="match status" value="1"/>
</dbReference>
<dbReference type="FunFam" id="3.40.50.300:FF:000003">
    <property type="entry name" value="Elongation factor Tu"/>
    <property type="match status" value="1"/>
</dbReference>
<dbReference type="Gene3D" id="3.40.50.300">
    <property type="entry name" value="P-loop containing nucleotide triphosphate hydrolases"/>
    <property type="match status" value="1"/>
</dbReference>
<dbReference type="Gene3D" id="2.40.30.10">
    <property type="entry name" value="Translation factors"/>
    <property type="match status" value="2"/>
</dbReference>
<dbReference type="HAMAP" id="MF_00118_B">
    <property type="entry name" value="EF_Tu_B"/>
    <property type="match status" value="1"/>
</dbReference>
<dbReference type="InterPro" id="IPR041709">
    <property type="entry name" value="EF-Tu_GTP-bd"/>
</dbReference>
<dbReference type="InterPro" id="IPR050055">
    <property type="entry name" value="EF-Tu_GTPase"/>
</dbReference>
<dbReference type="InterPro" id="IPR004161">
    <property type="entry name" value="EFTu-like_2"/>
</dbReference>
<dbReference type="InterPro" id="IPR033720">
    <property type="entry name" value="EFTU_2"/>
</dbReference>
<dbReference type="InterPro" id="IPR031157">
    <property type="entry name" value="G_TR_CS"/>
</dbReference>
<dbReference type="InterPro" id="IPR027417">
    <property type="entry name" value="P-loop_NTPase"/>
</dbReference>
<dbReference type="InterPro" id="IPR005225">
    <property type="entry name" value="Small_GTP-bd"/>
</dbReference>
<dbReference type="InterPro" id="IPR000795">
    <property type="entry name" value="T_Tr_GTP-bd_dom"/>
</dbReference>
<dbReference type="InterPro" id="IPR009000">
    <property type="entry name" value="Transl_B-barrel_sf"/>
</dbReference>
<dbReference type="InterPro" id="IPR009001">
    <property type="entry name" value="Transl_elong_EF1A/Init_IF2_C"/>
</dbReference>
<dbReference type="InterPro" id="IPR004541">
    <property type="entry name" value="Transl_elong_EFTu/EF1A_bac/org"/>
</dbReference>
<dbReference type="InterPro" id="IPR004160">
    <property type="entry name" value="Transl_elong_EFTu/EF1A_C"/>
</dbReference>
<dbReference type="NCBIfam" id="TIGR00485">
    <property type="entry name" value="EF-Tu"/>
    <property type="match status" value="1"/>
</dbReference>
<dbReference type="NCBIfam" id="NF000766">
    <property type="entry name" value="PRK00049.1"/>
    <property type="match status" value="1"/>
</dbReference>
<dbReference type="NCBIfam" id="NF009372">
    <property type="entry name" value="PRK12735.1"/>
    <property type="match status" value="1"/>
</dbReference>
<dbReference type="NCBIfam" id="NF009373">
    <property type="entry name" value="PRK12736.1"/>
    <property type="match status" value="1"/>
</dbReference>
<dbReference type="NCBIfam" id="TIGR00231">
    <property type="entry name" value="small_GTP"/>
    <property type="match status" value="1"/>
</dbReference>
<dbReference type="PANTHER" id="PTHR43721:SF22">
    <property type="entry name" value="ELONGATION FACTOR TU, MITOCHONDRIAL"/>
    <property type="match status" value="1"/>
</dbReference>
<dbReference type="PANTHER" id="PTHR43721">
    <property type="entry name" value="ELONGATION FACTOR TU-RELATED"/>
    <property type="match status" value="1"/>
</dbReference>
<dbReference type="Pfam" id="PF00009">
    <property type="entry name" value="GTP_EFTU"/>
    <property type="match status" value="1"/>
</dbReference>
<dbReference type="Pfam" id="PF03144">
    <property type="entry name" value="GTP_EFTU_D2"/>
    <property type="match status" value="1"/>
</dbReference>
<dbReference type="Pfam" id="PF03143">
    <property type="entry name" value="GTP_EFTU_D3"/>
    <property type="match status" value="1"/>
</dbReference>
<dbReference type="PRINTS" id="PR00315">
    <property type="entry name" value="ELONGATNFCT"/>
</dbReference>
<dbReference type="SUPFAM" id="SSF50465">
    <property type="entry name" value="EF-Tu/eEF-1alpha/eIF2-gamma C-terminal domain"/>
    <property type="match status" value="1"/>
</dbReference>
<dbReference type="SUPFAM" id="SSF52540">
    <property type="entry name" value="P-loop containing nucleoside triphosphate hydrolases"/>
    <property type="match status" value="1"/>
</dbReference>
<dbReference type="SUPFAM" id="SSF50447">
    <property type="entry name" value="Translation proteins"/>
    <property type="match status" value="1"/>
</dbReference>
<dbReference type="PROSITE" id="PS00301">
    <property type="entry name" value="G_TR_1"/>
    <property type="match status" value="1"/>
</dbReference>
<dbReference type="PROSITE" id="PS51722">
    <property type="entry name" value="G_TR_2"/>
    <property type="match status" value="1"/>
</dbReference>
<organism>
    <name type="scientific">Pelobacter propionicus (strain DSM 2379 / NBRC 103807 / OttBd1)</name>
    <dbReference type="NCBI Taxonomy" id="338966"/>
    <lineage>
        <taxon>Bacteria</taxon>
        <taxon>Pseudomonadati</taxon>
        <taxon>Thermodesulfobacteriota</taxon>
        <taxon>Desulfuromonadia</taxon>
        <taxon>Desulfuromonadales</taxon>
        <taxon>Desulfuromonadaceae</taxon>
        <taxon>Pelobacter</taxon>
    </lineage>
</organism>
<reference key="1">
    <citation type="submission" date="2006-10" db="EMBL/GenBank/DDBJ databases">
        <title>Complete sequence of chromosome of Pelobacter propionicus DSM 2379.</title>
        <authorList>
            <consortium name="US DOE Joint Genome Institute"/>
            <person name="Copeland A."/>
            <person name="Lucas S."/>
            <person name="Lapidus A."/>
            <person name="Barry K."/>
            <person name="Detter J.C."/>
            <person name="Glavina del Rio T."/>
            <person name="Hammon N."/>
            <person name="Israni S."/>
            <person name="Dalin E."/>
            <person name="Tice H."/>
            <person name="Pitluck S."/>
            <person name="Saunders E."/>
            <person name="Brettin T."/>
            <person name="Bruce D."/>
            <person name="Han C."/>
            <person name="Tapia R."/>
            <person name="Schmutz J."/>
            <person name="Larimer F."/>
            <person name="Land M."/>
            <person name="Hauser L."/>
            <person name="Kyrpides N."/>
            <person name="Kim E."/>
            <person name="Lovley D."/>
            <person name="Richardson P."/>
        </authorList>
    </citation>
    <scope>NUCLEOTIDE SEQUENCE [LARGE SCALE GENOMIC DNA]</scope>
    <source>
        <strain>DSM 2379 / NBRC 103807 / OttBd1</strain>
    </source>
</reference>